<name>HSP1_MYOWA</name>
<comment type="function">
    <text evidence="1">Protamines substitute for histones in the chromatin of sperm during the haploid phase of spermatogenesis. They compact sperm DNA into a highly condensed, stable and inactive complex (By similarity).</text>
</comment>
<comment type="subcellular location">
    <subcellularLocation>
        <location evidence="1">Nucleus</location>
    </subcellularLocation>
    <subcellularLocation>
        <location evidence="1">Chromosome</location>
    </subcellularLocation>
</comment>
<comment type="tissue specificity">
    <text>Testis.</text>
</comment>
<comment type="similarity">
    <text evidence="3">Belongs to the protamine P1 family.</text>
</comment>
<proteinExistence type="evidence at transcript level"/>
<keyword id="KW-0158">Chromosome</keyword>
<keyword id="KW-0217">Developmental protein</keyword>
<keyword id="KW-0221">Differentiation</keyword>
<keyword id="KW-0226">DNA condensation</keyword>
<keyword id="KW-0238">DNA-binding</keyword>
<keyword id="KW-0544">Nucleosome core</keyword>
<keyword id="KW-0539">Nucleus</keyword>
<keyword id="KW-0744">Spermatogenesis</keyword>
<organism>
    <name type="scientific">Myoictis wallacei</name>
    <name type="common">Wallace's three-striped dasyure</name>
    <dbReference type="NCBI Taxonomy" id="63144"/>
    <lineage>
        <taxon>Eukaryota</taxon>
        <taxon>Metazoa</taxon>
        <taxon>Chordata</taxon>
        <taxon>Craniata</taxon>
        <taxon>Vertebrata</taxon>
        <taxon>Euteleostomi</taxon>
        <taxon>Mammalia</taxon>
        <taxon>Metatheria</taxon>
        <taxon>Dasyuromorphia</taxon>
        <taxon>Dasyuridae</taxon>
        <taxon>Myoictis</taxon>
    </lineage>
</organism>
<protein>
    <recommendedName>
        <fullName>Sperm protamine P1</fullName>
    </recommendedName>
</protein>
<gene>
    <name type="primary">PRM1</name>
</gene>
<accession>Q71VG9</accession>
<reference key="1">
    <citation type="journal article" date="1997" name="J. Mammal. Evol.">
        <title>Reconstructing the taxonomic radiation of dasyurine marsupials with cytochrome b, 12S rRNA, and protamine P1 gene trees.</title>
        <authorList>
            <person name="Krajewski C."/>
            <person name="Young J."/>
            <person name="Buckley L."/>
            <person name="Woolley P.A."/>
            <person name="Westerman M."/>
        </authorList>
    </citation>
    <scope>NUCLEOTIDE SEQUENCE [GENOMIC DNA]</scope>
</reference>
<evidence type="ECO:0000250" key="1"/>
<evidence type="ECO:0000256" key="2">
    <source>
        <dbReference type="SAM" id="MobiDB-lite"/>
    </source>
</evidence>
<evidence type="ECO:0000305" key="3"/>
<feature type="chain" id="PRO_0000191504" description="Sperm protamine P1">
    <location>
        <begin position="1"/>
        <end position="63"/>
    </location>
</feature>
<feature type="region of interest" description="Disordered" evidence="2">
    <location>
        <begin position="1"/>
        <end position="63"/>
    </location>
</feature>
<dbReference type="EMBL" id="AF010269">
    <property type="protein sequence ID" value="AAB69299.1"/>
    <property type="molecule type" value="Genomic_DNA"/>
</dbReference>
<dbReference type="GO" id="GO:0000786">
    <property type="term" value="C:nucleosome"/>
    <property type="evidence" value="ECO:0007669"/>
    <property type="project" value="UniProtKB-KW"/>
</dbReference>
<dbReference type="GO" id="GO:0005634">
    <property type="term" value="C:nucleus"/>
    <property type="evidence" value="ECO:0007669"/>
    <property type="project" value="UniProtKB-SubCell"/>
</dbReference>
<dbReference type="GO" id="GO:0003677">
    <property type="term" value="F:DNA binding"/>
    <property type="evidence" value="ECO:0007669"/>
    <property type="project" value="UniProtKB-KW"/>
</dbReference>
<dbReference type="GO" id="GO:0030261">
    <property type="term" value="P:chromosome condensation"/>
    <property type="evidence" value="ECO:0007669"/>
    <property type="project" value="UniProtKB-KW"/>
</dbReference>
<dbReference type="GO" id="GO:0035092">
    <property type="term" value="P:sperm DNA condensation"/>
    <property type="evidence" value="ECO:0007669"/>
    <property type="project" value="InterPro"/>
</dbReference>
<dbReference type="InterPro" id="IPR000221">
    <property type="entry name" value="Protamine_P1"/>
</dbReference>
<dbReference type="PROSITE" id="PS00048">
    <property type="entry name" value="PROTAMINE_P1"/>
    <property type="match status" value="1"/>
</dbReference>
<sequence>MARYRRHSRSRSRSRYRRRRRRRSRHRNRRRTYRRSRRHSRRRRGRRRGYSRRRYSRRGRRRY</sequence>